<dbReference type="EMBL" id="S82911">
    <property type="protein sequence ID" value="AAB46839.1"/>
    <property type="molecule type" value="mRNA"/>
</dbReference>
<dbReference type="EMBL" id="AY730764">
    <property type="protein sequence ID" value="AAU21314.1"/>
    <property type="molecule type" value="mRNA"/>
</dbReference>
<dbReference type="EMBL" id="CH473958">
    <property type="protein sequence ID" value="EDM09378.1"/>
    <property type="molecule type" value="Genomic_DNA"/>
</dbReference>
<dbReference type="RefSeq" id="NP_722543.1">
    <molecule id="P63014-1"/>
    <property type="nucleotide sequence ID" value="NM_153821.2"/>
</dbReference>
<dbReference type="RefSeq" id="XP_006250213.1">
    <molecule id="P63014-2"/>
    <property type="nucleotide sequence ID" value="XM_006250151.5"/>
</dbReference>
<dbReference type="SMR" id="P63014"/>
<dbReference type="FunCoup" id="P63014">
    <property type="interactions" value="115"/>
</dbReference>
<dbReference type="STRING" id="10116.ENSRNOP00000004950"/>
<dbReference type="iPTMnet" id="P63014"/>
<dbReference type="PhosphoSitePlus" id="P63014"/>
<dbReference type="PaxDb" id="10116-ENSRNOP00000004950"/>
<dbReference type="Ensembl" id="ENSRNOT00000004950.7">
    <molecule id="P63014-2"/>
    <property type="protein sequence ID" value="ENSRNOP00000004950.5"/>
    <property type="gene ID" value="ENSRNOG00000003720.7"/>
</dbReference>
<dbReference type="Ensembl" id="ENSRNOT00000082385.2">
    <molecule id="P63014-1"/>
    <property type="protein sequence ID" value="ENSRNOP00000075169.2"/>
    <property type="gene ID" value="ENSRNOG00000003720.7"/>
</dbReference>
<dbReference type="GeneID" id="266813"/>
<dbReference type="KEGG" id="rno:266813"/>
<dbReference type="UCSC" id="RGD:628884">
    <molecule id="P63014-1"/>
    <property type="organism name" value="rat"/>
</dbReference>
<dbReference type="AGR" id="RGD:628884"/>
<dbReference type="CTD" id="5396"/>
<dbReference type="RGD" id="628884">
    <property type="gene designation" value="Prrx1"/>
</dbReference>
<dbReference type="eggNOG" id="KOG0490">
    <property type="taxonomic scope" value="Eukaryota"/>
</dbReference>
<dbReference type="GeneTree" id="ENSGT00940000159466"/>
<dbReference type="HOGENOM" id="CLU_087323_0_0_1"/>
<dbReference type="InParanoid" id="P63014"/>
<dbReference type="OMA" id="SCALANH"/>
<dbReference type="OrthoDB" id="6159439at2759"/>
<dbReference type="PhylomeDB" id="P63014"/>
<dbReference type="TreeFam" id="TF351612"/>
<dbReference type="PRO" id="PR:P63014"/>
<dbReference type="Proteomes" id="UP000002494">
    <property type="component" value="Chromosome 13"/>
</dbReference>
<dbReference type="Proteomes" id="UP000234681">
    <property type="component" value="Chromosome 13"/>
</dbReference>
<dbReference type="Bgee" id="ENSRNOG00000003720">
    <property type="expression patterns" value="Expressed in esophagus and 17 other cell types or tissues"/>
</dbReference>
<dbReference type="GO" id="GO:0005829">
    <property type="term" value="C:cytosol"/>
    <property type="evidence" value="ECO:0007669"/>
    <property type="project" value="Ensembl"/>
</dbReference>
<dbReference type="GO" id="GO:0005654">
    <property type="term" value="C:nucleoplasm"/>
    <property type="evidence" value="ECO:0007669"/>
    <property type="project" value="Ensembl"/>
</dbReference>
<dbReference type="GO" id="GO:0005634">
    <property type="term" value="C:nucleus"/>
    <property type="evidence" value="ECO:0000266"/>
    <property type="project" value="RGD"/>
</dbReference>
<dbReference type="GO" id="GO:0003677">
    <property type="term" value="F:DNA binding"/>
    <property type="evidence" value="ECO:0000266"/>
    <property type="project" value="RGD"/>
</dbReference>
<dbReference type="GO" id="GO:0001228">
    <property type="term" value="F:DNA-binding transcription activator activity, RNA polymerase II-specific"/>
    <property type="evidence" value="ECO:0000266"/>
    <property type="project" value="RGD"/>
</dbReference>
<dbReference type="GO" id="GO:0000981">
    <property type="term" value="F:DNA-binding transcription factor activity, RNA polymerase II-specific"/>
    <property type="evidence" value="ECO:0000318"/>
    <property type="project" value="GO_Central"/>
</dbReference>
<dbReference type="GO" id="GO:0001227">
    <property type="term" value="F:DNA-binding transcription repressor activity, RNA polymerase II-specific"/>
    <property type="evidence" value="ECO:0000266"/>
    <property type="project" value="RGD"/>
</dbReference>
<dbReference type="GO" id="GO:0071837">
    <property type="term" value="F:HMG box domain binding"/>
    <property type="evidence" value="ECO:0000266"/>
    <property type="project" value="RGD"/>
</dbReference>
<dbReference type="GO" id="GO:0000978">
    <property type="term" value="F:RNA polymerase II cis-regulatory region sequence-specific DNA binding"/>
    <property type="evidence" value="ECO:0000266"/>
    <property type="project" value="RGD"/>
</dbReference>
<dbReference type="GO" id="GO:0016251">
    <property type="term" value="F:RNA polymerase II general transcription initiation factor activity"/>
    <property type="evidence" value="ECO:0000266"/>
    <property type="project" value="RGD"/>
</dbReference>
<dbReference type="GO" id="GO:0061629">
    <property type="term" value="F:RNA polymerase II-specific DNA-binding transcription factor binding"/>
    <property type="evidence" value="ECO:0000266"/>
    <property type="project" value="RGD"/>
</dbReference>
<dbReference type="GO" id="GO:0048844">
    <property type="term" value="P:artery morphogenesis"/>
    <property type="evidence" value="ECO:0000266"/>
    <property type="project" value="RGD"/>
</dbReference>
<dbReference type="GO" id="GO:0051216">
    <property type="term" value="P:cartilage development"/>
    <property type="evidence" value="ECO:0000266"/>
    <property type="project" value="RGD"/>
</dbReference>
<dbReference type="GO" id="GO:0048701">
    <property type="term" value="P:embryonic cranial skeleton morphogenesis"/>
    <property type="evidence" value="ECO:0000266"/>
    <property type="project" value="RGD"/>
</dbReference>
<dbReference type="GO" id="GO:0030326">
    <property type="term" value="P:embryonic limb morphogenesis"/>
    <property type="evidence" value="ECO:0000266"/>
    <property type="project" value="RGD"/>
</dbReference>
<dbReference type="GO" id="GO:0048704">
    <property type="term" value="P:embryonic skeletal system morphogenesis"/>
    <property type="evidence" value="ECO:0000266"/>
    <property type="project" value="RGD"/>
</dbReference>
<dbReference type="GO" id="GO:0042472">
    <property type="term" value="P:inner ear morphogenesis"/>
    <property type="evidence" value="ECO:0000266"/>
    <property type="project" value="RGD"/>
</dbReference>
<dbReference type="GO" id="GO:0010463">
    <property type="term" value="P:mesenchymal cell proliferation"/>
    <property type="evidence" value="ECO:0000266"/>
    <property type="project" value="RGD"/>
</dbReference>
<dbReference type="GO" id="GO:0042474">
    <property type="term" value="P:middle ear morphogenesis"/>
    <property type="evidence" value="ECO:0000266"/>
    <property type="project" value="RGD"/>
</dbReference>
<dbReference type="GO" id="GO:0000122">
    <property type="term" value="P:negative regulation of transcription by RNA polymerase II"/>
    <property type="evidence" value="ECO:0000314"/>
    <property type="project" value="RGD"/>
</dbReference>
<dbReference type="GO" id="GO:0048664">
    <property type="term" value="P:neuron fate determination"/>
    <property type="evidence" value="ECO:0000266"/>
    <property type="project" value="RGD"/>
</dbReference>
<dbReference type="GO" id="GO:0097150">
    <property type="term" value="P:neuronal stem cell population maintenance"/>
    <property type="evidence" value="ECO:0000266"/>
    <property type="project" value="RGD"/>
</dbReference>
<dbReference type="GO" id="GO:0002053">
    <property type="term" value="P:positive regulation of mesenchymal cell proliferation"/>
    <property type="evidence" value="ECO:0000266"/>
    <property type="project" value="RGD"/>
</dbReference>
<dbReference type="GO" id="GO:0045880">
    <property type="term" value="P:positive regulation of smoothened signaling pathway"/>
    <property type="evidence" value="ECO:0000266"/>
    <property type="project" value="RGD"/>
</dbReference>
<dbReference type="GO" id="GO:2000648">
    <property type="term" value="P:positive regulation of stem cell proliferation"/>
    <property type="evidence" value="ECO:0000266"/>
    <property type="project" value="RGD"/>
</dbReference>
<dbReference type="GO" id="GO:0045944">
    <property type="term" value="P:positive regulation of transcription by RNA polymerase II"/>
    <property type="evidence" value="ECO:0000266"/>
    <property type="project" value="RGD"/>
</dbReference>
<dbReference type="GO" id="GO:0070570">
    <property type="term" value="P:regulation of neuron projection regeneration"/>
    <property type="evidence" value="ECO:0000266"/>
    <property type="project" value="RGD"/>
</dbReference>
<dbReference type="GO" id="GO:0006357">
    <property type="term" value="P:regulation of transcription by RNA polymerase II"/>
    <property type="evidence" value="ECO:0000318"/>
    <property type="project" value="GO_Central"/>
</dbReference>
<dbReference type="GO" id="GO:0060021">
    <property type="term" value="P:roof of mouth development"/>
    <property type="evidence" value="ECO:0000266"/>
    <property type="project" value="RGD"/>
</dbReference>
<dbReference type="GO" id="GO:0007224">
    <property type="term" value="P:smoothened signaling pathway"/>
    <property type="evidence" value="ECO:0000266"/>
    <property type="project" value="RGD"/>
</dbReference>
<dbReference type="GO" id="GO:0072089">
    <property type="term" value="P:stem cell proliferation"/>
    <property type="evidence" value="ECO:0000266"/>
    <property type="project" value="RGD"/>
</dbReference>
<dbReference type="CDD" id="cd00086">
    <property type="entry name" value="homeodomain"/>
    <property type="match status" value="1"/>
</dbReference>
<dbReference type="FunFam" id="1.10.10.60:FF:000066">
    <property type="entry name" value="Paired mesoderm homeobox protein 1"/>
    <property type="match status" value="1"/>
</dbReference>
<dbReference type="Gene3D" id="1.10.10.60">
    <property type="entry name" value="Homeodomain-like"/>
    <property type="match status" value="1"/>
</dbReference>
<dbReference type="InterPro" id="IPR001356">
    <property type="entry name" value="HD"/>
</dbReference>
<dbReference type="InterPro" id="IPR017970">
    <property type="entry name" value="Homeobox_CS"/>
</dbReference>
<dbReference type="InterPro" id="IPR009057">
    <property type="entry name" value="Homeodomain-like_sf"/>
</dbReference>
<dbReference type="InterPro" id="IPR003654">
    <property type="entry name" value="OAR_dom"/>
</dbReference>
<dbReference type="InterPro" id="IPR043378">
    <property type="entry name" value="PRRX1/2"/>
</dbReference>
<dbReference type="PANTHER" id="PTHR46385:SF1">
    <property type="entry name" value="PAIRED MESODERM HOMEOBOX PROTEIN 1"/>
    <property type="match status" value="1"/>
</dbReference>
<dbReference type="PANTHER" id="PTHR46385">
    <property type="entry name" value="PAIRED MESODERM HOMEOBOX PROTEIN 1-RELATED"/>
    <property type="match status" value="1"/>
</dbReference>
<dbReference type="Pfam" id="PF00046">
    <property type="entry name" value="Homeodomain"/>
    <property type="match status" value="1"/>
</dbReference>
<dbReference type="Pfam" id="PF03826">
    <property type="entry name" value="OAR"/>
    <property type="match status" value="1"/>
</dbReference>
<dbReference type="SMART" id="SM00389">
    <property type="entry name" value="HOX"/>
    <property type="match status" value="1"/>
</dbReference>
<dbReference type="SUPFAM" id="SSF46689">
    <property type="entry name" value="Homeodomain-like"/>
    <property type="match status" value="1"/>
</dbReference>
<dbReference type="PROSITE" id="PS00027">
    <property type="entry name" value="HOMEOBOX_1"/>
    <property type="match status" value="1"/>
</dbReference>
<dbReference type="PROSITE" id="PS50071">
    <property type="entry name" value="HOMEOBOX_2"/>
    <property type="match status" value="1"/>
</dbReference>
<dbReference type="PROSITE" id="PS50803">
    <property type="entry name" value="OAR"/>
    <property type="match status" value="1"/>
</dbReference>
<keyword id="KW-0007">Acetylation</keyword>
<keyword id="KW-0025">Alternative splicing</keyword>
<keyword id="KW-0217">Developmental protein</keyword>
<keyword id="KW-0238">DNA-binding</keyword>
<keyword id="KW-0371">Homeobox</keyword>
<keyword id="KW-0539">Nucleus</keyword>
<keyword id="KW-0597">Phosphoprotein</keyword>
<keyword id="KW-1185">Reference proteome</keyword>
<feature type="chain" id="PRO_0000049253" description="Paired mesoderm homeobox protein 1">
    <location>
        <begin position="1"/>
        <end position="245"/>
    </location>
</feature>
<feature type="DNA-binding region" description="Homeobox" evidence="3">
    <location>
        <begin position="94"/>
        <end position="153"/>
    </location>
</feature>
<feature type="region of interest" description="Disordered" evidence="5">
    <location>
        <begin position="1"/>
        <end position="24"/>
    </location>
</feature>
<feature type="region of interest" description="Disordered" evidence="5">
    <location>
        <begin position="54"/>
        <end position="103"/>
    </location>
</feature>
<feature type="short sequence motif" description="OAR" evidence="4">
    <location>
        <begin position="222"/>
        <end position="235"/>
    </location>
</feature>
<feature type="compositionally biased region" description="Polar residues" evidence="5">
    <location>
        <begin position="69"/>
        <end position="84"/>
    </location>
</feature>
<feature type="modified residue" description="Phosphoserine" evidence="8">
    <location>
        <position position="21"/>
    </location>
</feature>
<feature type="modified residue" description="N6-acetyllysine" evidence="1">
    <location>
        <position position="160"/>
    </location>
</feature>
<feature type="modified residue" description="Phosphoserine" evidence="2">
    <location>
        <position position="197"/>
    </location>
</feature>
<feature type="splice variant" id="VSP_053544" description="In isoform 2." evidence="6">
    <original>SAMATYSATCANNSPAQGINMANSIANLRLKAKEYSLQRNQVPTVN</original>
    <variation>RSSSLPRCCLHEGLHNGF</variation>
    <location>
        <begin position="200"/>
        <end position="245"/>
    </location>
</feature>
<organism>
    <name type="scientific">Rattus norvegicus</name>
    <name type="common">Rat</name>
    <dbReference type="NCBI Taxonomy" id="10116"/>
    <lineage>
        <taxon>Eukaryota</taxon>
        <taxon>Metazoa</taxon>
        <taxon>Chordata</taxon>
        <taxon>Craniata</taxon>
        <taxon>Vertebrata</taxon>
        <taxon>Euteleostomi</taxon>
        <taxon>Mammalia</taxon>
        <taxon>Eutheria</taxon>
        <taxon>Euarchontoglires</taxon>
        <taxon>Glires</taxon>
        <taxon>Rodentia</taxon>
        <taxon>Myomorpha</taxon>
        <taxon>Muroidea</taxon>
        <taxon>Muridae</taxon>
        <taxon>Murinae</taxon>
        <taxon>Rattus</taxon>
    </lineage>
</organism>
<gene>
    <name type="primary">Prrx1</name>
</gene>
<name>PRRX1_RAT</name>
<sequence length="245" mass="27269">MTSSYGHVLERQPALGGRLDSPGNLDTLQAKKNFSVSHLLDLEEAGDMVAAQADESVGEAGRSLLESPGLTSGSDTPQQDNDQLNSEEKKKRKQRRNRTTFNSSQLQALERVFERTHYPDAFVREDLARRVNLTEARVQVWFQNRRAKFRRNERAMLANKNASLLKSYSGDVTAVEQPIVPRPAPRPTDYLSWGTASPYSAMATYSATCANNSPAQGINMANSIANLRLKAKEYSLQRNQVPTVN</sequence>
<comment type="function">
    <text evidence="1">Master transcription factor of stromal fibroblasts for myofibroblastic lineage progression. Orchestrates the functional drift of fibroblasts into myofibroblastic phenotype via TGF-beta signaling by remodeling a super-enhancer landscape. Through this function, plays an essential role in wound healing process. Acts as a transcriptional regulator of muscle creatine kinase (MCK) and so has a role in the establishment of diverse mesodermal muscle types. The protein binds to an A/T-rich element in the muscle creatine enhancer. May play a role in homeostasis and regeneration of bone, white adipose tissue and derm.</text>
</comment>
<comment type="function">
    <molecule>Isoform 1</molecule>
    <text evidence="1">Transcriptional activator, when transfected in fibroblastic or myoblastic cell lines. This activity may be masked by the C-terminal OAR domain.</text>
</comment>
<comment type="function">
    <molecule>Isoform 2</molecule>
    <text evidence="1">Transcriptional repressor, when transfected in fibroblastic or myoblastic cell lines.</text>
</comment>
<comment type="subunit">
    <text evidence="1">Interacts with SMAD3.</text>
</comment>
<comment type="subcellular location">
    <subcellularLocation>
        <location evidence="1 3 4">Nucleus</location>
    </subcellularLocation>
</comment>
<comment type="alternative products">
    <event type="alternative splicing"/>
    <isoform>
        <id>P63014-1</id>
        <name>1</name>
        <name>Prx1a</name>
        <sequence type="displayed"/>
    </isoform>
    <isoform>
        <id>P63014-2</id>
        <name>2</name>
        <name>Prx1b</name>
        <sequence type="described" ref="VSP_053544"/>
    </isoform>
</comment>
<comment type="similarity">
    <text evidence="7">Belongs to the paired homeobox family.</text>
</comment>
<protein>
    <recommendedName>
        <fullName>Paired mesoderm homeobox protein 1</fullName>
    </recommendedName>
    <alternativeName>
        <fullName>Paired-related homeobox protein 1</fullName>
        <shortName>PRX-1</shortName>
        <shortName>rHox</shortName>
    </alternativeName>
</protein>
<evidence type="ECO:0000250" key="1">
    <source>
        <dbReference type="UniProtKB" id="P63013"/>
    </source>
</evidence>
<evidence type="ECO:0000255" key="2"/>
<evidence type="ECO:0000255" key="3">
    <source>
        <dbReference type="PROSITE-ProRule" id="PRU00108"/>
    </source>
</evidence>
<evidence type="ECO:0000255" key="4">
    <source>
        <dbReference type="PROSITE-ProRule" id="PRU00138"/>
    </source>
</evidence>
<evidence type="ECO:0000256" key="5">
    <source>
        <dbReference type="SAM" id="MobiDB-lite"/>
    </source>
</evidence>
<evidence type="ECO:0000303" key="6">
    <source ref="2"/>
</evidence>
<evidence type="ECO:0000305" key="7"/>
<evidence type="ECO:0007744" key="8">
    <source>
    </source>
</evidence>
<proteinExistence type="evidence at protein level"/>
<reference key="1">
    <citation type="journal article" date="1995" name="J. Cell. Biochem.">
        <title>rHox: a homeobox gene expressed in osteoblastic cells.</title>
        <authorList>
            <person name="Hu Y."/>
            <person name="Flanagan J."/>
            <person name="Brennan D.P."/>
            <person name="Zhou H."/>
            <person name="Ng K.W."/>
            <person name="Eisman J.A."/>
            <person name="Morrison N.A."/>
        </authorList>
    </citation>
    <scope>NUCLEOTIDE SEQUENCE [MRNA] (ISOFORM 1)</scope>
</reference>
<reference key="2">
    <citation type="submission" date="2004-08" db="EMBL/GenBank/DDBJ databases">
        <title>Rat Prx-1 is expressed in activated HSC and involved in regulation of smooth muscle alpha actin promoter activity.</title>
        <authorList>
            <person name="Shi Z."/>
            <person name="Rockey D.C."/>
        </authorList>
    </citation>
    <scope>NUCLEOTIDE SEQUENCE [MRNA] (ISOFORM 2)</scope>
    <source>
        <strain>Sprague-Dawley</strain>
    </source>
</reference>
<reference key="3">
    <citation type="submission" date="2005-09" db="EMBL/GenBank/DDBJ databases">
        <authorList>
            <person name="Mural R.J."/>
            <person name="Adams M.D."/>
            <person name="Myers E.W."/>
            <person name="Smith H.O."/>
            <person name="Venter J.C."/>
        </authorList>
    </citation>
    <scope>NUCLEOTIDE SEQUENCE [LARGE SCALE GENOMIC DNA]</scope>
</reference>
<reference key="4">
    <citation type="journal article" date="2012" name="Nat. Commun.">
        <title>Quantitative maps of protein phosphorylation sites across 14 different rat organs and tissues.</title>
        <authorList>
            <person name="Lundby A."/>
            <person name="Secher A."/>
            <person name="Lage K."/>
            <person name="Nordsborg N.B."/>
            <person name="Dmytriyev A."/>
            <person name="Lundby C."/>
            <person name="Olsen J.V."/>
        </authorList>
    </citation>
    <scope>PHOSPHORYLATION [LARGE SCALE ANALYSIS] AT SER-21</scope>
    <scope>IDENTIFICATION BY MASS SPECTROMETRY [LARGE SCALE ANALYSIS]</scope>
</reference>
<accession>P63014</accession>
<accession>P43271</accession>
<accession>Q02810</accession>
<accession>Q643W9</accession>